<feature type="chain" id="PRO_1000024446" description="tRNA N6-adenosine threonylcarbamoyltransferase">
    <location>
        <begin position="1"/>
        <end position="342"/>
    </location>
</feature>
<feature type="binding site" evidence="1">
    <location>
        <position position="112"/>
    </location>
    <ligand>
        <name>Fe cation</name>
        <dbReference type="ChEBI" id="CHEBI:24875"/>
    </ligand>
</feature>
<feature type="binding site" evidence="1">
    <location>
        <position position="116"/>
    </location>
    <ligand>
        <name>Fe cation</name>
        <dbReference type="ChEBI" id="CHEBI:24875"/>
    </ligand>
</feature>
<feature type="binding site" evidence="1">
    <location>
        <begin position="134"/>
        <end position="138"/>
    </location>
    <ligand>
        <name>substrate</name>
    </ligand>
</feature>
<feature type="binding site" evidence="1">
    <location>
        <position position="167"/>
    </location>
    <ligand>
        <name>substrate</name>
    </ligand>
</feature>
<feature type="binding site" evidence="1">
    <location>
        <position position="180"/>
    </location>
    <ligand>
        <name>substrate</name>
    </ligand>
</feature>
<feature type="binding site" evidence="1">
    <location>
        <position position="280"/>
    </location>
    <ligand>
        <name>substrate</name>
    </ligand>
</feature>
<feature type="binding site" evidence="1">
    <location>
        <position position="308"/>
    </location>
    <ligand>
        <name>Fe cation</name>
        <dbReference type="ChEBI" id="CHEBI:24875"/>
    </ligand>
</feature>
<evidence type="ECO:0000255" key="1">
    <source>
        <dbReference type="HAMAP-Rule" id="MF_01445"/>
    </source>
</evidence>
<dbReference type="EC" id="2.3.1.234" evidence="1"/>
<dbReference type="EMBL" id="CP000409">
    <property type="protein sequence ID" value="ABV72988.1"/>
    <property type="molecule type" value="Genomic_DNA"/>
</dbReference>
<dbReference type="RefSeq" id="WP_012148189.1">
    <property type="nucleotide sequence ID" value="NC_009879.1"/>
</dbReference>
<dbReference type="SMR" id="A8EXA5"/>
<dbReference type="STRING" id="293613.A1E_00175"/>
<dbReference type="KEGG" id="rcm:A1E_00175"/>
<dbReference type="eggNOG" id="COG0533">
    <property type="taxonomic scope" value="Bacteria"/>
</dbReference>
<dbReference type="HOGENOM" id="CLU_023208_0_2_5"/>
<dbReference type="Proteomes" id="UP000007056">
    <property type="component" value="Chromosome"/>
</dbReference>
<dbReference type="GO" id="GO:0005737">
    <property type="term" value="C:cytoplasm"/>
    <property type="evidence" value="ECO:0007669"/>
    <property type="project" value="UniProtKB-SubCell"/>
</dbReference>
<dbReference type="GO" id="GO:0005506">
    <property type="term" value="F:iron ion binding"/>
    <property type="evidence" value="ECO:0007669"/>
    <property type="project" value="UniProtKB-UniRule"/>
</dbReference>
<dbReference type="GO" id="GO:0061711">
    <property type="term" value="F:N(6)-L-threonylcarbamoyladenine synthase activity"/>
    <property type="evidence" value="ECO:0007669"/>
    <property type="project" value="UniProtKB-EC"/>
</dbReference>
<dbReference type="GO" id="GO:0002949">
    <property type="term" value="P:tRNA threonylcarbamoyladenosine modification"/>
    <property type="evidence" value="ECO:0007669"/>
    <property type="project" value="UniProtKB-UniRule"/>
</dbReference>
<dbReference type="CDD" id="cd24133">
    <property type="entry name" value="ASKHA_NBD_TsaD_bac"/>
    <property type="match status" value="1"/>
</dbReference>
<dbReference type="FunFam" id="3.30.420.40:FF:000012">
    <property type="entry name" value="tRNA N6-adenosine threonylcarbamoyltransferase"/>
    <property type="match status" value="1"/>
</dbReference>
<dbReference type="Gene3D" id="3.30.420.40">
    <property type="match status" value="2"/>
</dbReference>
<dbReference type="HAMAP" id="MF_01445">
    <property type="entry name" value="TsaD"/>
    <property type="match status" value="1"/>
</dbReference>
<dbReference type="InterPro" id="IPR043129">
    <property type="entry name" value="ATPase_NBD"/>
</dbReference>
<dbReference type="InterPro" id="IPR000905">
    <property type="entry name" value="Gcp-like_dom"/>
</dbReference>
<dbReference type="InterPro" id="IPR017861">
    <property type="entry name" value="KAE1/TsaD"/>
</dbReference>
<dbReference type="InterPro" id="IPR017860">
    <property type="entry name" value="Peptidase_M22_CS"/>
</dbReference>
<dbReference type="InterPro" id="IPR022450">
    <property type="entry name" value="TsaD"/>
</dbReference>
<dbReference type="NCBIfam" id="TIGR00329">
    <property type="entry name" value="gcp_kae1"/>
    <property type="match status" value="1"/>
</dbReference>
<dbReference type="NCBIfam" id="TIGR03723">
    <property type="entry name" value="T6A_TsaD_YgjD"/>
    <property type="match status" value="1"/>
</dbReference>
<dbReference type="PANTHER" id="PTHR11735">
    <property type="entry name" value="TRNA N6-ADENOSINE THREONYLCARBAMOYLTRANSFERASE"/>
    <property type="match status" value="1"/>
</dbReference>
<dbReference type="PANTHER" id="PTHR11735:SF6">
    <property type="entry name" value="TRNA N6-ADENOSINE THREONYLCARBAMOYLTRANSFERASE, MITOCHONDRIAL"/>
    <property type="match status" value="1"/>
</dbReference>
<dbReference type="Pfam" id="PF00814">
    <property type="entry name" value="TsaD"/>
    <property type="match status" value="1"/>
</dbReference>
<dbReference type="PRINTS" id="PR00789">
    <property type="entry name" value="OSIALOPTASE"/>
</dbReference>
<dbReference type="SUPFAM" id="SSF53067">
    <property type="entry name" value="Actin-like ATPase domain"/>
    <property type="match status" value="2"/>
</dbReference>
<dbReference type="PROSITE" id="PS01016">
    <property type="entry name" value="GLYCOPROTEASE"/>
    <property type="match status" value="1"/>
</dbReference>
<reference key="1">
    <citation type="submission" date="2007-09" db="EMBL/GenBank/DDBJ databases">
        <title>Complete genome sequence of Rickettsia canadensis.</title>
        <authorList>
            <person name="Madan A."/>
            <person name="Fahey J."/>
            <person name="Helton E."/>
            <person name="Ketteman M."/>
            <person name="Madan A."/>
            <person name="Rodrigues S."/>
            <person name="Sanchez A."/>
            <person name="Whiting M."/>
            <person name="Dasch G."/>
            <person name="Eremeeva M."/>
        </authorList>
    </citation>
    <scope>NUCLEOTIDE SEQUENCE [LARGE SCALE GENOMIC DNA]</scope>
    <source>
        <strain>McKiel</strain>
    </source>
</reference>
<proteinExistence type="inferred from homology"/>
<protein>
    <recommendedName>
        <fullName evidence="1">tRNA N6-adenosine threonylcarbamoyltransferase</fullName>
        <ecNumber evidence="1">2.3.1.234</ecNumber>
    </recommendedName>
    <alternativeName>
        <fullName evidence="1">N6-L-threonylcarbamoyladenine synthase</fullName>
        <shortName evidence="1">t(6)A synthase</shortName>
    </alternativeName>
    <alternativeName>
        <fullName evidence="1">t(6)A37 threonylcarbamoyladenosine biosynthesis protein TsaD</fullName>
    </alternativeName>
    <alternativeName>
        <fullName evidence="1">tRNA threonylcarbamoyladenosine biosynthesis protein TsaD</fullName>
    </alternativeName>
</protein>
<accession>A8EXA5</accession>
<keyword id="KW-0012">Acyltransferase</keyword>
<keyword id="KW-0963">Cytoplasm</keyword>
<keyword id="KW-0408">Iron</keyword>
<keyword id="KW-0479">Metal-binding</keyword>
<keyword id="KW-0808">Transferase</keyword>
<keyword id="KW-0819">tRNA processing</keyword>
<sequence>MTKILGIESSCDDTAVSIITENREILSNIIISQNTEHAVFGGVVPEIAARSHLSNLDKALKSVLKESDTKLTEISAIAATSGPGLIGGVIVGSMFARSLSSALKKPFIAINHLEGHALTARLTDNIPYPYLLLLASGGHCQFVAILGLRKYKILGSTIDDAVGEAFDKVAKMLNLGFPGGSEIETRAKFGNSHKYKFPKPIINSGNCNMSFSGLKTAVRTLIMSLKEINDTVVNDIAASFQFTIGEILSSKLQDAIRAYEQMINNCDKKNIVIAGGVAANKYLQEILSSGAKTYGYQLIYPPIHLCTDNAAMIAYAGLERYNNKLFTPLNFCPKARWNLEEI</sequence>
<gene>
    <name evidence="1" type="primary">tsaD</name>
    <name type="synonym">gcp</name>
    <name type="ordered locus">A1E_00175</name>
</gene>
<organism>
    <name type="scientific">Rickettsia canadensis (strain McKiel)</name>
    <dbReference type="NCBI Taxonomy" id="293613"/>
    <lineage>
        <taxon>Bacteria</taxon>
        <taxon>Pseudomonadati</taxon>
        <taxon>Pseudomonadota</taxon>
        <taxon>Alphaproteobacteria</taxon>
        <taxon>Rickettsiales</taxon>
        <taxon>Rickettsiaceae</taxon>
        <taxon>Rickettsieae</taxon>
        <taxon>Rickettsia</taxon>
        <taxon>belli group</taxon>
    </lineage>
</organism>
<name>TSAD_RICCK</name>
<comment type="function">
    <text evidence="1">Required for the formation of a threonylcarbamoyl group on adenosine at position 37 (t(6)A37) in tRNAs that read codons beginning with adenine. Is involved in the transfer of the threonylcarbamoyl moiety of threonylcarbamoyl-AMP (TC-AMP) to the N6 group of A37, together with TsaE and TsaB. TsaD likely plays a direct catalytic role in this reaction.</text>
</comment>
<comment type="catalytic activity">
    <reaction evidence="1">
        <text>L-threonylcarbamoyladenylate + adenosine(37) in tRNA = N(6)-L-threonylcarbamoyladenosine(37) in tRNA + AMP + H(+)</text>
        <dbReference type="Rhea" id="RHEA:37059"/>
        <dbReference type="Rhea" id="RHEA-COMP:10162"/>
        <dbReference type="Rhea" id="RHEA-COMP:10163"/>
        <dbReference type="ChEBI" id="CHEBI:15378"/>
        <dbReference type="ChEBI" id="CHEBI:73682"/>
        <dbReference type="ChEBI" id="CHEBI:74411"/>
        <dbReference type="ChEBI" id="CHEBI:74418"/>
        <dbReference type="ChEBI" id="CHEBI:456215"/>
        <dbReference type="EC" id="2.3.1.234"/>
    </reaction>
</comment>
<comment type="cofactor">
    <cofactor evidence="1">
        <name>Fe(2+)</name>
        <dbReference type="ChEBI" id="CHEBI:29033"/>
    </cofactor>
    <text evidence="1">Binds 1 Fe(2+) ion per subunit.</text>
</comment>
<comment type="subcellular location">
    <subcellularLocation>
        <location evidence="1">Cytoplasm</location>
    </subcellularLocation>
</comment>
<comment type="similarity">
    <text evidence="1">Belongs to the KAE1 / TsaD family.</text>
</comment>